<gene>
    <name evidence="8" type="primary">AP25</name>
    <name evidence="7" type="synonym">RADC1</name>
    <name evidence="11" type="ordered locus">Os03g0186900</name>
    <name evidence="10" type="ordered locus">LOC_Os03g08790</name>
</gene>
<evidence type="ECO:0000250" key="1">
    <source>
        <dbReference type="UniProtKB" id="P42210"/>
    </source>
</evidence>
<evidence type="ECO:0000255" key="2"/>
<evidence type="ECO:0000255" key="3">
    <source>
        <dbReference type="PROSITE-ProRule" id="PRU00498"/>
    </source>
</evidence>
<evidence type="ECO:0000255" key="4">
    <source>
        <dbReference type="PROSITE-ProRule" id="PRU01103"/>
    </source>
</evidence>
<evidence type="ECO:0000269" key="5">
    <source>
    </source>
</evidence>
<evidence type="ECO:0000269" key="6">
    <source>
    </source>
</evidence>
<evidence type="ECO:0000303" key="7">
    <source>
    </source>
</evidence>
<evidence type="ECO:0000303" key="8">
    <source>
    </source>
</evidence>
<evidence type="ECO:0000305" key="9"/>
<evidence type="ECO:0000312" key="10">
    <source>
        <dbReference type="EMBL" id="ABF94364.1"/>
    </source>
</evidence>
<evidence type="ECO:0000312" key="11">
    <source>
        <dbReference type="EMBL" id="BAF11119.1"/>
    </source>
</evidence>
<proteinExistence type="evidence at transcript level"/>
<dbReference type="EC" id="3.4.23.-" evidence="9"/>
<dbReference type="EMBL" id="AB122090">
    <property type="protein sequence ID" value="BAD26705.1"/>
    <property type="molecule type" value="Genomic_DNA"/>
</dbReference>
<dbReference type="EMBL" id="DP000009">
    <property type="protein sequence ID" value="ABF94364.1"/>
    <property type="molecule type" value="Genomic_DNA"/>
</dbReference>
<dbReference type="EMBL" id="AP008209">
    <property type="protein sequence ID" value="BAF11119.1"/>
    <property type="molecule type" value="Genomic_DNA"/>
</dbReference>
<dbReference type="EMBL" id="AP014959">
    <property type="protein sequence ID" value="BAS82681.1"/>
    <property type="molecule type" value="Genomic_DNA"/>
</dbReference>
<dbReference type="EMBL" id="AK062232">
    <property type="protein sequence ID" value="BAG88249.1"/>
    <property type="molecule type" value="mRNA"/>
</dbReference>
<dbReference type="EMBL" id="AK120050">
    <property type="protein sequence ID" value="BAG99854.1"/>
    <property type="molecule type" value="mRNA"/>
</dbReference>
<dbReference type="RefSeq" id="XP_015632334.1">
    <property type="nucleotide sequence ID" value="XM_015776848.1"/>
</dbReference>
<dbReference type="SMR" id="Q6F4N5"/>
<dbReference type="FunCoup" id="Q6F4N5">
    <property type="interactions" value="287"/>
</dbReference>
<dbReference type="STRING" id="39947.Q6F4N5"/>
<dbReference type="GlyCosmos" id="Q6F4N5">
    <property type="glycosylation" value="3 sites, No reported glycans"/>
</dbReference>
<dbReference type="PaxDb" id="39947-Q6F4N5"/>
<dbReference type="EnsemblPlants" id="Os03t0186900-01">
    <property type="protein sequence ID" value="Os03t0186900-01"/>
    <property type="gene ID" value="Os03g0186900"/>
</dbReference>
<dbReference type="Gramene" id="Os03t0186900-01">
    <property type="protein sequence ID" value="Os03t0186900-01"/>
    <property type="gene ID" value="Os03g0186900"/>
</dbReference>
<dbReference type="KEGG" id="dosa:Os03g0186900"/>
<dbReference type="eggNOG" id="KOG1339">
    <property type="taxonomic scope" value="Eukaryota"/>
</dbReference>
<dbReference type="HOGENOM" id="CLU_005738_5_1_1"/>
<dbReference type="InParanoid" id="Q6F4N5"/>
<dbReference type="OMA" id="LFQGQAC"/>
<dbReference type="OrthoDB" id="2747330at2759"/>
<dbReference type="Proteomes" id="UP000000763">
    <property type="component" value="Chromosome 3"/>
</dbReference>
<dbReference type="Proteomes" id="UP000059680">
    <property type="component" value="Chromosome 3"/>
</dbReference>
<dbReference type="GO" id="GO:0004190">
    <property type="term" value="F:aspartic-type endopeptidase activity"/>
    <property type="evidence" value="ECO:0007669"/>
    <property type="project" value="UniProtKB-KW"/>
</dbReference>
<dbReference type="GO" id="GO:0006508">
    <property type="term" value="P:proteolysis"/>
    <property type="evidence" value="ECO:0007669"/>
    <property type="project" value="UniProtKB-KW"/>
</dbReference>
<dbReference type="GO" id="GO:0043067">
    <property type="term" value="P:regulation of programmed cell death"/>
    <property type="evidence" value="ECO:0000315"/>
    <property type="project" value="UniProtKB"/>
</dbReference>
<dbReference type="GO" id="GO:0009627">
    <property type="term" value="P:systemic acquired resistance"/>
    <property type="evidence" value="ECO:0007669"/>
    <property type="project" value="EnsemblPlants"/>
</dbReference>
<dbReference type="FunFam" id="2.40.70.10:FF:000022">
    <property type="entry name" value="Aspartyl protease AED3"/>
    <property type="match status" value="1"/>
</dbReference>
<dbReference type="FunFam" id="2.40.70.10:FF:000097">
    <property type="entry name" value="Aspartyl protease AED3"/>
    <property type="match status" value="1"/>
</dbReference>
<dbReference type="Gene3D" id="2.40.70.10">
    <property type="entry name" value="Acid Proteases"/>
    <property type="match status" value="2"/>
</dbReference>
<dbReference type="InterPro" id="IPR001461">
    <property type="entry name" value="Aspartic_peptidase_A1"/>
</dbReference>
<dbReference type="InterPro" id="IPR033121">
    <property type="entry name" value="PEPTIDASE_A1"/>
</dbReference>
<dbReference type="InterPro" id="IPR021109">
    <property type="entry name" value="Peptidase_aspartic_dom_sf"/>
</dbReference>
<dbReference type="InterPro" id="IPR032799">
    <property type="entry name" value="TAXi_C"/>
</dbReference>
<dbReference type="InterPro" id="IPR032861">
    <property type="entry name" value="TAXi_N"/>
</dbReference>
<dbReference type="PANTHER" id="PTHR13683:SF839">
    <property type="entry name" value="ASPARTYL PROTEASE AED3-LIKE"/>
    <property type="match status" value="1"/>
</dbReference>
<dbReference type="PANTHER" id="PTHR13683">
    <property type="entry name" value="ASPARTYL PROTEASES"/>
    <property type="match status" value="1"/>
</dbReference>
<dbReference type="Pfam" id="PF14541">
    <property type="entry name" value="TAXi_C"/>
    <property type="match status" value="1"/>
</dbReference>
<dbReference type="Pfam" id="PF14543">
    <property type="entry name" value="TAXi_N"/>
    <property type="match status" value="1"/>
</dbReference>
<dbReference type="SUPFAM" id="SSF50630">
    <property type="entry name" value="Acid proteases"/>
    <property type="match status" value="1"/>
</dbReference>
<dbReference type="PROSITE" id="PS51767">
    <property type="entry name" value="PEPTIDASE_A1"/>
    <property type="match status" value="1"/>
</dbReference>
<comment type="function">
    <text evidence="6">Anther-specific aspartic protease involved in tapetal programmed cell death (PCD). Directly regulated by the transcription factor EAT1/DTD in anthers during tapetum PCD and degeneration.</text>
</comment>
<comment type="induction">
    <text evidence="5">Down-regulated by chilling.</text>
</comment>
<comment type="similarity">
    <text evidence="4">Belongs to the peptidase A1 family.</text>
</comment>
<organism>
    <name type="scientific">Oryza sativa subsp. japonica</name>
    <name type="common">Rice</name>
    <dbReference type="NCBI Taxonomy" id="39947"/>
    <lineage>
        <taxon>Eukaryota</taxon>
        <taxon>Viridiplantae</taxon>
        <taxon>Streptophyta</taxon>
        <taxon>Embryophyta</taxon>
        <taxon>Tracheophyta</taxon>
        <taxon>Spermatophyta</taxon>
        <taxon>Magnoliopsida</taxon>
        <taxon>Liliopsida</taxon>
        <taxon>Poales</taxon>
        <taxon>Poaceae</taxon>
        <taxon>BOP clade</taxon>
        <taxon>Oryzoideae</taxon>
        <taxon>Oryzeae</taxon>
        <taxon>Oryzinae</taxon>
        <taxon>Oryza</taxon>
        <taxon>Oryza sativa</taxon>
    </lineage>
</organism>
<reference key="1">
    <citation type="journal article" date="2004" name="Biosci. Biotechnol. Biochem.">
        <title>cDNA microarray analysis of rice anther genes under chilling stress at the microsporogenesis stage revealed two genes with DNA transposon Castaway in the 5'-flanking region.</title>
        <authorList>
            <person name="Yamaguchi T."/>
            <person name="Nakayama K."/>
            <person name="Hayashi T."/>
            <person name="Yazaki J."/>
            <person name="Kishimoto N."/>
            <person name="Kikuchi S."/>
            <person name="Koike S."/>
        </authorList>
    </citation>
    <scope>NUCLEOTIDE SEQUENCE [GENOMIC DNA]</scope>
    <scope>INDUCTION</scope>
    <source>
        <strain>cv. Nipponbare</strain>
    </source>
</reference>
<reference key="2">
    <citation type="journal article" date="2005" name="Genome Res.">
        <title>Sequence, annotation, and analysis of synteny between rice chromosome 3 and diverged grass species.</title>
        <authorList>
            <consortium name="The rice chromosome 3 sequencing consortium"/>
            <person name="Buell C.R."/>
            <person name="Yuan Q."/>
            <person name="Ouyang S."/>
            <person name="Liu J."/>
            <person name="Zhu W."/>
            <person name="Wang A."/>
            <person name="Maiti R."/>
            <person name="Haas B."/>
            <person name="Wortman J."/>
            <person name="Pertea M."/>
            <person name="Jones K.M."/>
            <person name="Kim M."/>
            <person name="Overton L."/>
            <person name="Tsitrin T."/>
            <person name="Fadrosh D."/>
            <person name="Bera J."/>
            <person name="Weaver B."/>
            <person name="Jin S."/>
            <person name="Johri S."/>
            <person name="Reardon M."/>
            <person name="Webb K."/>
            <person name="Hill J."/>
            <person name="Moffat K."/>
            <person name="Tallon L."/>
            <person name="Van Aken S."/>
            <person name="Lewis M."/>
            <person name="Utterback T."/>
            <person name="Feldblyum T."/>
            <person name="Zismann V."/>
            <person name="Iobst S."/>
            <person name="Hsiao J."/>
            <person name="de Vazeille A.R."/>
            <person name="Salzberg S.L."/>
            <person name="White O."/>
            <person name="Fraser C.M."/>
            <person name="Yu Y."/>
            <person name="Kim H."/>
            <person name="Rambo T."/>
            <person name="Currie J."/>
            <person name="Collura K."/>
            <person name="Kernodle-Thompson S."/>
            <person name="Wei F."/>
            <person name="Kudrna K."/>
            <person name="Ammiraju J.S.S."/>
            <person name="Luo M."/>
            <person name="Goicoechea J.L."/>
            <person name="Wing R.A."/>
            <person name="Henry D."/>
            <person name="Oates R."/>
            <person name="Palmer M."/>
            <person name="Pries G."/>
            <person name="Saski C."/>
            <person name="Simmons J."/>
            <person name="Soderlund C."/>
            <person name="Nelson W."/>
            <person name="de la Bastide M."/>
            <person name="Spiegel L."/>
            <person name="Nascimento L."/>
            <person name="Huang E."/>
            <person name="Preston R."/>
            <person name="Zutavern T."/>
            <person name="Palmer L."/>
            <person name="O'Shaughnessy A."/>
            <person name="Dike S."/>
            <person name="McCombie W.R."/>
            <person name="Minx P."/>
            <person name="Cordum H."/>
            <person name="Wilson R."/>
            <person name="Jin W."/>
            <person name="Lee H.R."/>
            <person name="Jiang J."/>
            <person name="Jackson S."/>
        </authorList>
    </citation>
    <scope>NUCLEOTIDE SEQUENCE [LARGE SCALE GENOMIC DNA]</scope>
    <source>
        <strain>cv. Nipponbare</strain>
    </source>
</reference>
<reference key="3">
    <citation type="journal article" date="2005" name="Nature">
        <title>The map-based sequence of the rice genome.</title>
        <authorList>
            <consortium name="International rice genome sequencing project (IRGSP)"/>
        </authorList>
    </citation>
    <scope>NUCLEOTIDE SEQUENCE [LARGE SCALE GENOMIC DNA]</scope>
    <source>
        <strain>cv. Nipponbare</strain>
    </source>
</reference>
<reference key="4">
    <citation type="journal article" date="2008" name="Nucleic Acids Res.">
        <title>The rice annotation project database (RAP-DB): 2008 update.</title>
        <authorList>
            <consortium name="The rice annotation project (RAP)"/>
        </authorList>
    </citation>
    <scope>GENOME REANNOTATION</scope>
    <source>
        <strain>cv. Nipponbare</strain>
    </source>
</reference>
<reference key="5">
    <citation type="journal article" date="2013" name="Rice">
        <title>Improvement of the Oryza sativa Nipponbare reference genome using next generation sequence and optical map data.</title>
        <authorList>
            <person name="Kawahara Y."/>
            <person name="de la Bastide M."/>
            <person name="Hamilton J.P."/>
            <person name="Kanamori H."/>
            <person name="McCombie W.R."/>
            <person name="Ouyang S."/>
            <person name="Schwartz D.C."/>
            <person name="Tanaka T."/>
            <person name="Wu J."/>
            <person name="Zhou S."/>
            <person name="Childs K.L."/>
            <person name="Davidson R.M."/>
            <person name="Lin H."/>
            <person name="Quesada-Ocampo L."/>
            <person name="Vaillancourt B."/>
            <person name="Sakai H."/>
            <person name="Lee S.S."/>
            <person name="Kim J."/>
            <person name="Numa H."/>
            <person name="Itoh T."/>
            <person name="Buell C.R."/>
            <person name="Matsumoto T."/>
        </authorList>
    </citation>
    <scope>GENOME REANNOTATION</scope>
    <source>
        <strain>cv. Nipponbare</strain>
    </source>
</reference>
<reference key="6">
    <citation type="journal article" date="2003" name="Science">
        <title>Collection, mapping, and annotation of over 28,000 cDNA clones from japonica rice.</title>
        <authorList>
            <consortium name="The rice full-length cDNA consortium"/>
        </authorList>
    </citation>
    <scope>NUCLEOTIDE SEQUENCE [LARGE SCALE MRNA]</scope>
    <source>
        <strain>cv. Nipponbare</strain>
    </source>
</reference>
<reference key="7">
    <citation type="journal article" date="2013" name="Nat. Commun.">
        <title>EAT1 promotes tapetal cell death by regulating aspartic proteases during male reproductive development in rice.</title>
        <authorList>
            <person name="Niu N."/>
            <person name="Liang W."/>
            <person name="Yang X."/>
            <person name="Jin W."/>
            <person name="Wilson Z.A."/>
            <person name="Hu J."/>
            <person name="Zhang D."/>
        </authorList>
    </citation>
    <scope>FUNCTION</scope>
</reference>
<name>AP25_ORYSJ</name>
<feature type="signal peptide" evidence="2">
    <location>
        <begin position="1"/>
        <end position="23"/>
    </location>
</feature>
<feature type="chain" id="PRO_5007211852" description="Aspartyl protease 25">
    <location>
        <begin position="24"/>
        <end position="438"/>
    </location>
</feature>
<feature type="domain" description="Peptidase A1" evidence="4">
    <location>
        <begin position="79"/>
        <end position="433"/>
    </location>
</feature>
<feature type="active site" evidence="4">
    <location>
        <position position="97"/>
    </location>
</feature>
<feature type="active site" evidence="4">
    <location>
        <position position="313"/>
    </location>
</feature>
<feature type="glycosylation site" description="N-linked (GlcNAc...) asparagine" evidence="3">
    <location>
        <position position="123"/>
    </location>
</feature>
<feature type="glycosylation site" description="N-linked (GlcNAc...) asparagine" evidence="3">
    <location>
        <position position="193"/>
    </location>
</feature>
<feature type="glycosylation site" description="N-linked (GlcNAc...) asparagine" evidence="3">
    <location>
        <position position="282"/>
    </location>
</feature>
<feature type="disulfide bond" evidence="1">
    <location>
        <begin position="107"/>
        <end position="113"/>
    </location>
</feature>
<feature type="disulfide bond" evidence="1">
    <location>
        <begin position="352"/>
        <end position="394"/>
    </location>
</feature>
<sequence length="438" mass="45077">MAATTTIPLLLLLLAATVAAAAAELSVYHNVHPSSPSPLESIIALARDDDARLLFLSSKAATAGVSSAPVASGQAPPSYVVRAGLGSPSQQLLLALDTSADATWAHCSPCGTCPSSSLFAPANSSSYASLPCSSSWCPLFQGQACPAPQGGGDAAPPPATLPTCAFSKPFADASFQAALASDTLRLGKDAIPNYTFGCVSSVTGPTTNMPRQGLLGLGRGPMALLSQAGSLYNGVFSYCLPSYRSYYFSGSLRLGAGGGQPRSVRYTPMLRNPHRSSLYYVNVTGLSVGHAWVKVPAGSFAFDAATGAGTVVDSGTVITRWTAPVYAALREEFRRQVAAPSGYTSLGAFDTCFNTDEVAAGGAPAVTVHMDGGVDLALPMENTLIHSSATPLACLAMAEAPQNVNSVVNVIANLQQQNIRVVFDVANSRVGFAKESCN</sequence>
<keyword id="KW-0064">Aspartyl protease</keyword>
<keyword id="KW-1015">Disulfide bond</keyword>
<keyword id="KW-0325">Glycoprotein</keyword>
<keyword id="KW-0378">Hydrolase</keyword>
<keyword id="KW-0645">Protease</keyword>
<keyword id="KW-1185">Reference proteome</keyword>
<keyword id="KW-0732">Signal</keyword>
<accession>Q6F4N5</accession>
<protein>
    <recommendedName>
        <fullName evidence="9">Aspartyl protease 25</fullName>
        <ecNumber evidence="9">3.4.23.-</ecNumber>
    </recommendedName>
    <alternativeName>
        <fullName evidence="7">Protein RICE ANTHER DOWN-REGULATED BY CHILLING 1</fullName>
    </alternativeName>
</protein>